<protein>
    <recommendedName>
        <fullName>Small hydrophobic protein</fullName>
    </recommendedName>
</protein>
<reference key="1">
    <citation type="submission" date="1990-11" db="EMBL/GenBank/DDBJ databases">
        <authorList>
            <person name="Takeuchi K."/>
        </authorList>
    </citation>
    <scope>NUCLEOTIDE SEQUENCE [GENOMIC RNA]</scope>
</reference>
<reference key="2">
    <citation type="journal article" date="1993" name="Arch. Virol.">
        <title>Identification of a new mumps virus lineage by nucleotide sequence analysis of the SH gene of ten different strains.</title>
        <authorList>
            <person name="Yeo R.P."/>
            <person name="Afzal M.A."/>
            <person name="Forsey T."/>
            <person name="Rima B.K."/>
        </authorList>
    </citation>
    <scope>NUCLEOTIDE SEQUENCE [GENOMIC RNA]</scope>
</reference>
<reference key="3">
    <citation type="journal article" date="2000" name="J. Virol.">
        <title>Rescue of mumps virus from cDNA.</title>
        <authorList>
            <person name="Clarke D.K."/>
            <person name="Sidhu M.S."/>
            <person name="Johnson J.E."/>
            <person name="Udem S.A."/>
        </authorList>
    </citation>
    <scope>NUCLEOTIDE SEQUENCE [LARGE SCALE GENOMIC DNA]</scope>
    <source>
        <strain>Jeryl-Lynn</strain>
    </source>
</reference>
<reference key="4">
    <citation type="journal article" date="2002" name="Virology">
        <title>Sequence diversity of Jeryl Lynn strain of mumps virus: quantitative mutant analysis for vaccine quality control.</title>
        <authorList>
            <person name="Amexis G."/>
            <person name="Rubin S."/>
            <person name="Chizhikov V."/>
            <person name="Pelloquin F."/>
            <person name="Carbone K."/>
            <person name="Chumakov K."/>
        </authorList>
    </citation>
    <scope>NUCLEOTIDE SEQUENCE [LARGE SCALE GENOMIC DNA]</scope>
    <source>
        <strain>Jeryl-Lynn</strain>
    </source>
</reference>
<reference key="5">
    <citation type="journal article" date="2010" name="J. Gen. Virol.">
        <title>Mumps virus small hydrophobic protein targets ataxin-1 ubiquitin-like interacting protein (ubiquilin 4).</title>
        <authorList>
            <person name="Woznik M."/>
            <person name="Roedner C."/>
            <person name="Lemon K."/>
            <person name="Rima B."/>
            <person name="Mankertz A."/>
            <person name="Finsterbusch T."/>
        </authorList>
    </citation>
    <scope>INTERACTION WITH HOST PROTEIN UBQLN4</scope>
</reference>
<gene>
    <name type="primary">SH</name>
</gene>
<name>SH_MUMPJ</name>
<comment type="function">
    <text evidence="1">Plays a role in the inhibition of the host NF-kappa-B pathway. This inhibition occurs at the receptor level, by preventing the signaling of TNFR1 as well as IL-1R and TLR3.</text>
</comment>
<comment type="subunit">
    <text evidence="1 5">Interacts with host TNFRSF1A, RIPK1 and IRAK1; these interactions interfere with host NF-kappa-B activation at the level of receptor complexes (By similarity). Interacts with host protein UBQLN4 (PubMed:20702650).</text>
</comment>
<comment type="subcellular location">
    <subcellularLocation>
        <location evidence="1">Virion membrane</location>
        <topology evidence="1">Single-pass membrane protein</topology>
    </subcellularLocation>
    <subcellularLocation>
        <location evidence="1">Host cell membrane</location>
        <topology evidence="1">Single-pass membrane protein</topology>
    </subcellularLocation>
</comment>
<comment type="similarity">
    <text evidence="6">Belongs to the rubulavirus small hydrophobic protein family.</text>
</comment>
<organism>
    <name type="scientific">Mumps virus genotype A (strain Jeryl-Lynn)</name>
    <name type="common">MuV</name>
    <dbReference type="NCBI Taxonomy" id="11168"/>
    <lineage>
        <taxon>Viruses</taxon>
        <taxon>Riboviria</taxon>
        <taxon>Orthornavirae</taxon>
        <taxon>Negarnaviricota</taxon>
        <taxon>Haploviricotina</taxon>
        <taxon>Monjiviricetes</taxon>
        <taxon>Mononegavirales</taxon>
        <taxon>Paramyxoviridae</taxon>
        <taxon>Rubulavirinae</taxon>
        <taxon>Orthorubulavirus</taxon>
        <taxon>Orthorubulavirus parotitidis</taxon>
        <taxon>Mumps orthorubulavirus</taxon>
    </lineage>
</organism>
<organismHost>
    <name type="scientific">Homo sapiens</name>
    <name type="common">Human</name>
    <dbReference type="NCBI Taxonomy" id="9606"/>
</organismHost>
<evidence type="ECO:0000250" key="1">
    <source>
        <dbReference type="UniProtKB" id="P22112"/>
    </source>
</evidence>
<evidence type="ECO:0000255" key="2"/>
<evidence type="ECO:0000269" key="3">
    <source>
    </source>
</evidence>
<evidence type="ECO:0000269" key="4">
    <source>
    </source>
</evidence>
<evidence type="ECO:0000269" key="5">
    <source>
    </source>
</evidence>
<evidence type="ECO:0000305" key="6"/>
<sequence>MPAIQPPLYLTFLLLTLLYLIITLYVWTILTINHNTAVRYAALYQRSFSRWGFDQSL</sequence>
<accession>P22110</accession>
<accession>Q77IS2</accession>
<accession>Q9J4L2</accession>
<dbReference type="EMBL" id="D90232">
    <property type="protein sequence ID" value="BAA14280.1"/>
    <property type="molecule type" value="Genomic_RNA"/>
</dbReference>
<dbReference type="EMBL" id="X63707">
    <property type="protein sequence ID" value="CAA45239.1"/>
    <property type="molecule type" value="Genomic_RNA"/>
</dbReference>
<dbReference type="EMBL" id="AF201473">
    <property type="protein sequence ID" value="AAF70394.1"/>
    <property type="molecule type" value="Genomic_RNA"/>
</dbReference>
<dbReference type="EMBL" id="AF338106">
    <property type="protein sequence ID" value="AAK83229.1"/>
    <property type="molecule type" value="Genomic_RNA"/>
</dbReference>
<dbReference type="PIR" id="JQ2368">
    <property type="entry name" value="JQ2368"/>
</dbReference>
<dbReference type="PIR" id="JU0306">
    <property type="entry name" value="SHNZMJ"/>
</dbReference>
<dbReference type="SMR" id="P22110"/>
<dbReference type="Proteomes" id="UP000140319">
    <property type="component" value="Genome"/>
</dbReference>
<dbReference type="Proteomes" id="UP000163835">
    <property type="component" value="Genome"/>
</dbReference>
<dbReference type="GO" id="GO:0020002">
    <property type="term" value="C:host cell plasma membrane"/>
    <property type="evidence" value="ECO:0007669"/>
    <property type="project" value="UniProtKB-KW"/>
</dbReference>
<dbReference type="GO" id="GO:0016020">
    <property type="term" value="C:membrane"/>
    <property type="evidence" value="ECO:0007669"/>
    <property type="project" value="UniProtKB-KW"/>
</dbReference>
<dbReference type="GO" id="GO:0055036">
    <property type="term" value="C:virion membrane"/>
    <property type="evidence" value="ECO:0007669"/>
    <property type="project" value="UniProtKB-UniRule"/>
</dbReference>
<dbReference type="GO" id="GO:0085034">
    <property type="term" value="P:symbiont-mediated suppression of host NF-kappaB cascade"/>
    <property type="evidence" value="ECO:0007669"/>
    <property type="project" value="UniProtKB-KW"/>
</dbReference>
<dbReference type="InterPro" id="IPR001477">
    <property type="entry name" value="SH"/>
</dbReference>
<dbReference type="Pfam" id="PF01445">
    <property type="entry name" value="SH"/>
    <property type="match status" value="1"/>
</dbReference>
<dbReference type="PIRSF" id="PIRSF003923">
    <property type="entry name" value="SH"/>
    <property type="match status" value="1"/>
</dbReference>
<keyword id="KW-1032">Host cell membrane</keyword>
<keyword id="KW-1043">Host membrane</keyword>
<keyword id="KW-0945">Host-virus interaction</keyword>
<keyword id="KW-1100">Inhibition of host NF-kappa-B by virus</keyword>
<keyword id="KW-0472">Membrane</keyword>
<keyword id="KW-0812">Transmembrane</keyword>
<keyword id="KW-1133">Transmembrane helix</keyword>
<keyword id="KW-0946">Virion</keyword>
<feature type="chain" id="PRO_0000142878" description="Small hydrophobic protein">
    <location>
        <begin position="1"/>
        <end position="57"/>
    </location>
</feature>
<feature type="topological domain" description="Virion surface" evidence="2">
    <location>
        <begin position="1"/>
        <end position="8"/>
    </location>
</feature>
<feature type="transmembrane region" description="Helical" evidence="2">
    <location>
        <begin position="9"/>
        <end position="29"/>
    </location>
</feature>
<feature type="topological domain" description="Intravirion" evidence="2">
    <location>
        <begin position="30"/>
        <end position="57"/>
    </location>
</feature>
<feature type="sequence variant" evidence="3 4">
    <original>LLT</original>
    <variation>VLI</variation>
    <location>
        <begin position="14"/>
        <end position="16"/>
    </location>
</feature>
<feature type="sequence variant" evidence="3 4">
    <original>HN</original>
    <variation>YK</variation>
    <location>
        <begin position="34"/>
        <end position="35"/>
    </location>
</feature>
<feature type="sequence variant" evidence="3 4">
    <original>Q</original>
    <variation>H</variation>
    <location>
        <position position="55"/>
    </location>
</feature>
<proteinExistence type="evidence at protein level"/>